<feature type="signal peptide" evidence="2">
    <location>
        <begin position="1"/>
        <end position="24"/>
    </location>
</feature>
<feature type="chain" id="PRO_5000395595" description="Kunitz-type serine protease inhibitor nigrescinin-5">
    <location>
        <begin position="25"/>
        <end position="83"/>
    </location>
</feature>
<feature type="domain" description="BPTI/Kunitz inhibitor" evidence="3">
    <location>
        <begin position="31"/>
        <end position="81"/>
    </location>
</feature>
<feature type="site" description="Reactive bond for trypsin" evidence="1">
    <location>
        <begin position="41"/>
        <end position="42"/>
    </location>
</feature>
<feature type="disulfide bond" evidence="3">
    <location>
        <begin position="31"/>
        <end position="81"/>
    </location>
</feature>
<feature type="disulfide bond" evidence="3">
    <location>
        <begin position="40"/>
        <end position="64"/>
    </location>
</feature>
<feature type="disulfide bond" evidence="3">
    <location>
        <begin position="56"/>
        <end position="77"/>
    </location>
</feature>
<proteinExistence type="evidence at transcript level"/>
<dbReference type="EMBL" id="EF990744">
    <property type="protein sequence ID" value="ABV64398.1"/>
    <property type="molecule type" value="mRNA"/>
</dbReference>
<dbReference type="SMR" id="B5KL36"/>
<dbReference type="MEROPS" id="I02.052"/>
<dbReference type="GO" id="GO:0005615">
    <property type="term" value="C:extracellular space"/>
    <property type="evidence" value="ECO:0007669"/>
    <property type="project" value="TreeGrafter"/>
</dbReference>
<dbReference type="GO" id="GO:0004867">
    <property type="term" value="F:serine-type endopeptidase inhibitor activity"/>
    <property type="evidence" value="ECO:0007669"/>
    <property type="project" value="UniProtKB-KW"/>
</dbReference>
<dbReference type="CDD" id="cd22594">
    <property type="entry name" value="Kunitz_textilinin-like"/>
    <property type="match status" value="1"/>
</dbReference>
<dbReference type="FunFam" id="4.10.410.10:FF:000021">
    <property type="entry name" value="Serine protease inhibitor, putative"/>
    <property type="match status" value="1"/>
</dbReference>
<dbReference type="Gene3D" id="4.10.410.10">
    <property type="entry name" value="Pancreatic trypsin inhibitor Kunitz domain"/>
    <property type="match status" value="1"/>
</dbReference>
<dbReference type="InterPro" id="IPR002223">
    <property type="entry name" value="Kunitz_BPTI"/>
</dbReference>
<dbReference type="InterPro" id="IPR036880">
    <property type="entry name" value="Kunitz_BPTI_sf"/>
</dbReference>
<dbReference type="InterPro" id="IPR020901">
    <property type="entry name" value="Prtase_inh_Kunz-CS"/>
</dbReference>
<dbReference type="InterPro" id="IPR050098">
    <property type="entry name" value="TFPI/VKTCI-like"/>
</dbReference>
<dbReference type="PANTHER" id="PTHR10083:SF374">
    <property type="entry name" value="BPTI_KUNITZ INHIBITOR DOMAIN-CONTAINING PROTEIN"/>
    <property type="match status" value="1"/>
</dbReference>
<dbReference type="PANTHER" id="PTHR10083">
    <property type="entry name" value="KUNITZ-TYPE PROTEASE INHIBITOR-RELATED"/>
    <property type="match status" value="1"/>
</dbReference>
<dbReference type="Pfam" id="PF00014">
    <property type="entry name" value="Kunitz_BPTI"/>
    <property type="match status" value="1"/>
</dbReference>
<dbReference type="PRINTS" id="PR00759">
    <property type="entry name" value="BASICPTASE"/>
</dbReference>
<dbReference type="SMART" id="SM00131">
    <property type="entry name" value="KU"/>
    <property type="match status" value="1"/>
</dbReference>
<dbReference type="SUPFAM" id="SSF57362">
    <property type="entry name" value="BPTI-like"/>
    <property type="match status" value="1"/>
</dbReference>
<dbReference type="PROSITE" id="PS00280">
    <property type="entry name" value="BPTI_KUNITZ_1"/>
    <property type="match status" value="1"/>
</dbReference>
<dbReference type="PROSITE" id="PS50279">
    <property type="entry name" value="BPTI_KUNITZ_2"/>
    <property type="match status" value="1"/>
</dbReference>
<name>VKT5_CRYNI</name>
<protein>
    <recommendedName>
        <fullName>Kunitz-type serine protease inhibitor nigrescinin-5</fullName>
    </recommendedName>
</protein>
<organism>
    <name type="scientific">Cryptophis nigrescens</name>
    <name type="common">Eastern small-eyed snake</name>
    <name type="synonym">Rhinoplocephalus nigrescens</name>
    <dbReference type="NCBI Taxonomy" id="292442"/>
    <lineage>
        <taxon>Eukaryota</taxon>
        <taxon>Metazoa</taxon>
        <taxon>Chordata</taxon>
        <taxon>Craniata</taxon>
        <taxon>Vertebrata</taxon>
        <taxon>Euteleostomi</taxon>
        <taxon>Lepidosauria</taxon>
        <taxon>Squamata</taxon>
        <taxon>Bifurcata</taxon>
        <taxon>Unidentata</taxon>
        <taxon>Episquamata</taxon>
        <taxon>Toxicofera</taxon>
        <taxon>Serpentes</taxon>
        <taxon>Colubroidea</taxon>
        <taxon>Elapidae</taxon>
        <taxon>Hydrophiinae</taxon>
        <taxon>Cryptophis</taxon>
    </lineage>
</organism>
<sequence length="83" mass="9204">MSSGGLLLLLGPLTLWEVLTPVSSTDRPEFCELPEDSGPCKGLFHVFYYNSDQNQCLEFIYGGCYGNANNFKTIEECKRTCAA</sequence>
<accession>B5KL36</accession>
<evidence type="ECO:0000250" key="1"/>
<evidence type="ECO:0000255" key="2"/>
<evidence type="ECO:0000255" key="3">
    <source>
        <dbReference type="PROSITE-ProRule" id="PRU00031"/>
    </source>
</evidence>
<evidence type="ECO:0000305" key="4"/>
<comment type="function">
    <text evidence="1">Serine protease inhibitor.</text>
</comment>
<comment type="subcellular location">
    <subcellularLocation>
        <location evidence="1">Secreted</location>
    </subcellularLocation>
</comment>
<comment type="tissue specificity">
    <text>Expressed by the venom gland.</text>
</comment>
<comment type="similarity">
    <text evidence="4">Belongs to the venom Kunitz-type family.</text>
</comment>
<keyword id="KW-1015">Disulfide bond</keyword>
<keyword id="KW-0646">Protease inhibitor</keyword>
<keyword id="KW-0964">Secreted</keyword>
<keyword id="KW-0722">Serine protease inhibitor</keyword>
<keyword id="KW-0732">Signal</keyword>
<reference key="1">
    <citation type="submission" date="2007-06" db="EMBL/GenBank/DDBJ databases">
        <title>Identification of Kunitz-type serine protease inhibitors from the venom glands of Australian elapid snakes.</title>
        <authorList>
            <person name="St Pierre L."/>
            <person name="Earl S."/>
        </authorList>
    </citation>
    <scope>NUCLEOTIDE SEQUENCE [MRNA]</scope>
</reference>